<comment type="function">
    <text evidence="4 5 6">Catalyzes the 3'- or 5'-O-methylation of partially methylated flavonols, but does not accept quercetin or caffeate as substrates for methylation.</text>
</comment>
<comment type="catalytic activity">
    <reaction evidence="4 5 6">
        <text>3',5-dihydroxy-3,4',7-trimethoxyflavone + S-adenosyl-L-methionine = 5-hydroxy-3,7,3',4'-tetramethoxyflavone + S-adenosyl-L-homocysteine + H(+)</text>
        <dbReference type="Rhea" id="RHEA:61032"/>
        <dbReference type="ChEBI" id="CHEBI:15378"/>
        <dbReference type="ChEBI" id="CHEBI:57856"/>
        <dbReference type="ChEBI" id="CHEBI:59789"/>
        <dbReference type="ChEBI" id="CHEBI:77770"/>
        <dbReference type="ChEBI" id="CHEBI:144096"/>
    </reaction>
    <physiologicalReaction direction="left-to-right" evidence="4 5 6">
        <dbReference type="Rhea" id="RHEA:61033"/>
    </physiologicalReaction>
</comment>
<comment type="activity regulation">
    <text evidence="6">Inhibited by nickel (NiCl(2) and NiSO(4)) and para-chloromercuribenzoate.</text>
</comment>
<comment type="biophysicochemical properties">
    <kinetics>
        <KM evidence="5">6.4 uM for 3',5-dihydroxy-3,4',7-trimethoxyflavone</KM>
        <KM evidence="6">7.2 uM for 3',5-dihydroxy-3,4',7-trimethoxyflavone</KM>
        <KM evidence="6">20 uM for S-adenosyl-L-methionine</KM>
    </kinetics>
</comment>
<comment type="pathway">
    <text evidence="9">Flavonoid metabolism.</text>
</comment>
<comment type="subunit">
    <text evidence="2">Homodimer.</text>
</comment>
<comment type="similarity">
    <text evidence="9">Belongs to the class I-like SAM-binding methyltransferase superfamily. Cation-independent O-methyltransferase family.</text>
</comment>
<dbReference type="EC" id="2.1.1.-" evidence="5 6"/>
<dbReference type="EMBL" id="U16794">
    <property type="protein sequence ID" value="AAA80579.1"/>
    <property type="molecule type" value="mRNA"/>
</dbReference>
<dbReference type="SMR" id="Q42654"/>
<dbReference type="BioCyc" id="MetaCyc:MONOMER-17795"/>
<dbReference type="GO" id="GO:0008171">
    <property type="term" value="F:O-methyltransferase activity"/>
    <property type="evidence" value="ECO:0007669"/>
    <property type="project" value="InterPro"/>
</dbReference>
<dbReference type="GO" id="GO:0046983">
    <property type="term" value="F:protein dimerization activity"/>
    <property type="evidence" value="ECO:0007669"/>
    <property type="project" value="InterPro"/>
</dbReference>
<dbReference type="GO" id="GO:0008757">
    <property type="term" value="F:S-adenosylmethionine-dependent methyltransferase activity"/>
    <property type="evidence" value="ECO:0000314"/>
    <property type="project" value="UniProtKB"/>
</dbReference>
<dbReference type="GO" id="GO:0009812">
    <property type="term" value="P:flavonoid metabolic process"/>
    <property type="evidence" value="ECO:0000314"/>
    <property type="project" value="UniProtKB"/>
</dbReference>
<dbReference type="GO" id="GO:0032259">
    <property type="term" value="P:methylation"/>
    <property type="evidence" value="ECO:0007669"/>
    <property type="project" value="UniProtKB-KW"/>
</dbReference>
<dbReference type="CDD" id="cd02440">
    <property type="entry name" value="AdoMet_MTases"/>
    <property type="match status" value="1"/>
</dbReference>
<dbReference type="FunFam" id="1.10.10.10:FF:000357">
    <property type="entry name" value="Caffeic acid 3-O-methyltransferase"/>
    <property type="match status" value="1"/>
</dbReference>
<dbReference type="FunFam" id="3.40.50.150:FF:000061">
    <property type="entry name" value="Caffeic acid O-methyltransferase"/>
    <property type="match status" value="1"/>
</dbReference>
<dbReference type="Gene3D" id="3.40.50.150">
    <property type="entry name" value="Vaccinia Virus protein VP39"/>
    <property type="match status" value="1"/>
</dbReference>
<dbReference type="Gene3D" id="1.10.10.10">
    <property type="entry name" value="Winged helix-like DNA-binding domain superfamily/Winged helix DNA-binding domain"/>
    <property type="match status" value="1"/>
</dbReference>
<dbReference type="InterPro" id="IPR016461">
    <property type="entry name" value="COMT-like"/>
</dbReference>
<dbReference type="InterPro" id="IPR001077">
    <property type="entry name" value="O_MeTrfase_dom"/>
</dbReference>
<dbReference type="InterPro" id="IPR012967">
    <property type="entry name" value="Plant_O-MeTrfase_dimerisation"/>
</dbReference>
<dbReference type="InterPro" id="IPR029063">
    <property type="entry name" value="SAM-dependent_MTases_sf"/>
</dbReference>
<dbReference type="InterPro" id="IPR036388">
    <property type="entry name" value="WH-like_DNA-bd_sf"/>
</dbReference>
<dbReference type="InterPro" id="IPR036390">
    <property type="entry name" value="WH_DNA-bd_sf"/>
</dbReference>
<dbReference type="PANTHER" id="PTHR11746">
    <property type="entry name" value="O-METHYLTRANSFERASE"/>
    <property type="match status" value="1"/>
</dbReference>
<dbReference type="Pfam" id="PF08100">
    <property type="entry name" value="Dimerisation"/>
    <property type="match status" value="1"/>
</dbReference>
<dbReference type="Pfam" id="PF00891">
    <property type="entry name" value="Methyltransf_2"/>
    <property type="match status" value="1"/>
</dbReference>
<dbReference type="PIRSF" id="PIRSF005739">
    <property type="entry name" value="O-mtase"/>
    <property type="match status" value="1"/>
</dbReference>
<dbReference type="SUPFAM" id="SSF53335">
    <property type="entry name" value="S-adenosyl-L-methionine-dependent methyltransferases"/>
    <property type="match status" value="1"/>
</dbReference>
<dbReference type="SUPFAM" id="SSF46785">
    <property type="entry name" value="Winged helix' DNA-binding domain"/>
    <property type="match status" value="1"/>
</dbReference>
<dbReference type="PROSITE" id="PS51683">
    <property type="entry name" value="SAM_OMT_II"/>
    <property type="match status" value="1"/>
</dbReference>
<accession>Q42654</accession>
<reference key="1">
    <citation type="journal article" date="1996" name="Plant Mol. Biol.">
        <title>cDNA cloning and characterization of a 3'/5'-O-methyltransferase for partially methylated flavonols from Chrysosplenium americanum.</title>
        <authorList>
            <person name="Gauthier A."/>
            <person name="Gulick P.J."/>
            <person name="Ibrahim R.K."/>
        </authorList>
    </citation>
    <scope>NUCLEOTIDE SEQUENCE [MRNA]</scope>
    <scope>FUNCTION</scope>
    <scope>CATALYTIC ACTIVITY</scope>
    <scope>BIOPHYSICOCHEMICAL PROPERTIES</scope>
    <source>
        <tissue>Leaf</tissue>
    </source>
</reference>
<reference key="2">
    <citation type="journal article" date="1998" name="Phytochemistry">
        <title>Purification and immunological characterization of a recombinant trimethylflavonol 3'-O-methyltransferase.</title>
        <authorList>
            <person name="Seguin J."/>
            <person name="Muzac I."/>
            <person name="Ibrahim R.K."/>
        </authorList>
    </citation>
    <scope>FUNCTION</scope>
    <scope>CATALYTIC ACTIVITY</scope>
    <scope>ACTIVITY REGULATION</scope>
    <scope>BIOPHYSICOCHEMICAL PROPERTIES</scope>
</reference>
<reference key="3">
    <citation type="journal article" date="2004" name="Biochem. Cell Biol.">
        <title>Role of Serine 286 in cosubstrate binding and catalysis of a flavonol O-methyltransferase.</title>
        <authorList>
            <person name="Kornblatt J."/>
            <person name="Muzac I."/>
            <person name="Lim Y."/>
            <person name="Ahn J.H."/>
            <person name="Ibrahim R.K."/>
        </authorList>
    </citation>
    <scope>FUNCTION</scope>
    <scope>CATALYTIC ACTIVITY</scope>
    <scope>MUTAGENESIS OF SER-286</scope>
</reference>
<keyword id="KW-0489">Methyltransferase</keyword>
<keyword id="KW-0949">S-adenosyl-L-methionine</keyword>
<keyword id="KW-0808">Transferase</keyword>
<organism>
    <name type="scientific">Chrysosplenium americanum</name>
    <name type="common">American golden saxifrage</name>
    <dbReference type="NCBI Taxonomy" id="36749"/>
    <lineage>
        <taxon>Eukaryota</taxon>
        <taxon>Viridiplantae</taxon>
        <taxon>Streptophyta</taxon>
        <taxon>Embryophyta</taxon>
        <taxon>Tracheophyta</taxon>
        <taxon>Spermatophyta</taxon>
        <taxon>Magnoliopsida</taxon>
        <taxon>eudicotyledons</taxon>
        <taxon>Gunneridae</taxon>
        <taxon>Pentapetalae</taxon>
        <taxon>Saxifragales</taxon>
        <taxon>Saxifragaceae</taxon>
        <taxon>Chrysosplenieae</taxon>
        <taxon>Chrysosplenium</taxon>
    </lineage>
</organism>
<protein>
    <recommendedName>
        <fullName evidence="9">Flavonoid 3'-O-methyltransferase FOMT</fullName>
        <ecNumber evidence="5 6">2.1.1.-</ecNumber>
    </recommendedName>
</protein>
<gene>
    <name evidence="7" type="primary">FOMT1</name>
    <name evidence="8" type="synonym">F3'OMT</name>
    <name evidence="7" type="synonym">FOMT-3'</name>
</gene>
<proteinExistence type="evidence at protein level"/>
<sequence>MLFAMQLASASVLPMVLKSAIELDLLEIIASQDTCMSPTEIASHLPTTNPHAPTMIDRILRLLSSYSIVTCSVRSVDDQRVYSPAPVCKYLTKNQDGVSIAALCVAAQDKVLMECWYHMKDAVLDGGIPFNKAYGMPIFDYFAKDLGSNKVFNKGMSDFSSMIIKKILETYKGFQGLTSLVDVGGGTGATLTKILSKYPTIRGINFDLPHVIQDAPEYPGIEHVGGDMFVSVPKGDAIFMKWICHDWNEEQCLKLLKNCYDALPNNGKVIVAEYILPVVPDSSLASKLSVTADVMIVTQNSGGKERTEKEFEALAKAAGFQGFQVFCNAFTIYIIEFSKNISN</sequence>
<evidence type="ECO:0000250" key="1">
    <source>
        <dbReference type="UniProtKB" id="F1DBB3"/>
    </source>
</evidence>
<evidence type="ECO:0000250" key="2">
    <source>
        <dbReference type="UniProtKB" id="P28002"/>
    </source>
</evidence>
<evidence type="ECO:0000255" key="3">
    <source>
        <dbReference type="PROSITE-ProRule" id="PRU01020"/>
    </source>
</evidence>
<evidence type="ECO:0000269" key="4">
    <source>
    </source>
</evidence>
<evidence type="ECO:0000269" key="5">
    <source>
    </source>
</evidence>
<evidence type="ECO:0000269" key="6">
    <source>
    </source>
</evidence>
<evidence type="ECO:0000303" key="7">
    <source>
    </source>
</evidence>
<evidence type="ECO:0000303" key="8">
    <source>
    </source>
</evidence>
<evidence type="ECO:0000305" key="9"/>
<name>FOMT1_CHRAE</name>
<feature type="chain" id="PRO_0000448059" description="Flavonoid 3'-O-methyltransferase FOMT">
    <location>
        <begin position="1"/>
        <end position="343"/>
    </location>
</feature>
<feature type="active site" description="Proton acceptor" evidence="3">
    <location>
        <position position="245"/>
    </location>
</feature>
<feature type="active site" evidence="1">
    <location>
        <position position="273"/>
    </location>
</feature>
<feature type="active site" evidence="1">
    <location>
        <position position="305"/>
    </location>
</feature>
<feature type="binding site" evidence="2">
    <location>
        <position position="184"/>
    </location>
    <ligand>
        <name>S-adenosyl-L-homocysteine</name>
        <dbReference type="ChEBI" id="CHEBI:57856"/>
    </ligand>
</feature>
<feature type="binding site" evidence="2">
    <location>
        <position position="207"/>
    </location>
    <ligand>
        <name>S-adenosyl-L-homocysteine</name>
        <dbReference type="ChEBI" id="CHEBI:57856"/>
    </ligand>
</feature>
<feature type="binding site" evidence="2">
    <location>
        <position position="227"/>
    </location>
    <ligand>
        <name>S-adenosyl-L-homocysteine</name>
        <dbReference type="ChEBI" id="CHEBI:57856"/>
    </ligand>
</feature>
<feature type="binding site" evidence="2">
    <location>
        <position position="228"/>
    </location>
    <ligand>
        <name>S-adenosyl-L-homocysteine</name>
        <dbReference type="ChEBI" id="CHEBI:57856"/>
    </ligand>
</feature>
<feature type="binding site" evidence="2">
    <location>
        <position position="240"/>
    </location>
    <ligand>
        <name>S-adenosyl-L-homocysteine</name>
        <dbReference type="ChEBI" id="CHEBI:57856"/>
    </ligand>
</feature>
<feature type="binding site" evidence="2">
    <location>
        <position position="241"/>
    </location>
    <ligand>
        <name>S-adenosyl-L-homocysteine</name>
        <dbReference type="ChEBI" id="CHEBI:57856"/>
    </ligand>
</feature>
<feature type="site" description="Required for cosubstrate binding" evidence="4">
    <location>
        <position position="286"/>
    </location>
</feature>
<feature type="mutagenesis site" description="Loss of enzymatic activity; unable to bind cosubstrate." evidence="4">
    <original>S</original>
    <variation>R</variation>
    <variation>L</variation>
    <variation>K</variation>
    <variation>A</variation>
    <variation>T</variation>
    <location>
        <position position="286"/>
    </location>
</feature>